<geneLocation type="plasmid">
    <name>cp26</name>
    <name>circular 26 kb</name>
</geneLocation>
<reference key="1">
    <citation type="journal article" date="1994" name="J. Bacteriol.">
        <title>Plasmid location of Borrelia purine biosynthesis gene homologs.</title>
        <authorList>
            <person name="Margolis N."/>
            <person name="Hogan D."/>
            <person name="Tilly K."/>
            <person name="Rosa P."/>
        </authorList>
    </citation>
    <scope>NUCLEOTIDE SEQUENCE [GENOMIC DNA]</scope>
    <source>
        <strain>ATCC 35210 / DSM 4680 / CIP 102532 / B31</strain>
    </source>
</reference>
<reference key="2">
    <citation type="journal article" date="1997" name="Nature">
        <title>Genomic sequence of a Lyme disease spirochaete, Borrelia burgdorferi.</title>
        <authorList>
            <person name="Fraser C.M."/>
            <person name="Casjens S."/>
            <person name="Huang W.M."/>
            <person name="Sutton G.G."/>
            <person name="Clayton R.A."/>
            <person name="Lathigra R."/>
            <person name="White O."/>
            <person name="Ketchum K.A."/>
            <person name="Dodson R.J."/>
            <person name="Hickey E.K."/>
            <person name="Gwinn M.L."/>
            <person name="Dougherty B.A."/>
            <person name="Tomb J.-F."/>
            <person name="Fleischmann R.D."/>
            <person name="Richardson D.L."/>
            <person name="Peterson J.D."/>
            <person name="Kerlavage A.R."/>
            <person name="Quackenbush J."/>
            <person name="Salzberg S.L."/>
            <person name="Hanson M."/>
            <person name="van Vugt R."/>
            <person name="Palmer N."/>
            <person name="Adams M.D."/>
            <person name="Gocayne J.D."/>
            <person name="Weidman J.F."/>
            <person name="Utterback T.R."/>
            <person name="Watthey L."/>
            <person name="McDonald L.A."/>
            <person name="Artiach P."/>
            <person name="Bowman C."/>
            <person name="Garland S.A."/>
            <person name="Fujii C."/>
            <person name="Cotton M.D."/>
            <person name="Horst K."/>
            <person name="Roberts K.M."/>
            <person name="Hatch B."/>
            <person name="Smith H.O."/>
            <person name="Venter J.C."/>
        </authorList>
    </citation>
    <scope>NUCLEOTIDE SEQUENCE [LARGE SCALE GENOMIC DNA]</scope>
    <source>
        <strain>ATCC 35210 / DSM 4680 / CIP 102532 / B31</strain>
    </source>
</reference>
<reference key="3">
    <citation type="journal article" date="1997" name="J. Biol. Chem.">
        <title>Expression, purification, and characterization of inosine 5'-monophosphate dehydrogenase from Borrelia burgdorferi.</title>
        <authorList>
            <person name="Zhou X."/>
            <person name="Cahoon M."/>
            <person name="Rosa P."/>
            <person name="Hedstrom L."/>
        </authorList>
    </citation>
    <scope>PROTEIN SEQUENCE OF 2-7</scope>
    <scope>FUNCTION</scope>
    <scope>CATALYTIC ACTIVITY</scope>
    <scope>BIOPHYSICOCHEMICAL PROPERTIES</scope>
    <scope>COFACTOR</scope>
    <scope>SUBUNIT</scope>
    <source>
        <strain>ATCC 35210 / DSM 4680 / CIP 102532 / B31</strain>
    </source>
</reference>
<reference key="4">
    <citation type="journal article" date="2009" name="J. Bacteriol.">
        <title>GuaA and GuaB are essential for Borrelia burgdorferi survival in the tick-mouse infection cycle.</title>
        <authorList>
            <person name="Jewett M.W."/>
            <person name="Lawrence K.A."/>
            <person name="Bestor A."/>
            <person name="Byram R."/>
            <person name="Gherardini F."/>
            <person name="Rosa P.A."/>
        </authorList>
    </citation>
    <scope>FUNCTION</scope>
    <source>
        <strain>ATCC 35210 / DSM 4680 / CIP 102532 / B31</strain>
    </source>
</reference>
<reference key="5">
    <citation type="journal article" date="2000" name="Biochemistry">
        <title>Crystal structure at 2.4-A resolution of Borrelia burgdorferi inosine 5'-monophosphate dehydrogenase: evidence of a substrate-induced hinged-lid motion by loop 6.</title>
        <authorList>
            <person name="McMillan F.M."/>
            <person name="Cahoon M."/>
            <person name="White A."/>
            <person name="Hedstrom L."/>
            <person name="Petsko G.A."/>
            <person name="Ringe D."/>
        </authorList>
    </citation>
    <scope>X-RAY CRYSTALLOGRAPHY (2.4 ANGSTROMS)</scope>
</reference>
<accession>P49058</accession>
<evidence type="ECO:0000250" key="1">
    <source>
        <dbReference type="UniProtKB" id="P0ADG7"/>
    </source>
</evidence>
<evidence type="ECO:0000250" key="2">
    <source>
        <dbReference type="UniProtKB" id="P50097"/>
    </source>
</evidence>
<evidence type="ECO:0000250" key="3">
    <source>
        <dbReference type="UniProtKB" id="P9WKI7"/>
    </source>
</evidence>
<evidence type="ECO:0000269" key="4">
    <source>
    </source>
</evidence>
<evidence type="ECO:0000269" key="5">
    <source>
    </source>
</evidence>
<evidence type="ECO:0000303" key="6">
    <source>
    </source>
</evidence>
<evidence type="ECO:0000303" key="7">
    <source>
    </source>
</evidence>
<evidence type="ECO:0000305" key="8"/>
<evidence type="ECO:0000305" key="9">
    <source>
    </source>
</evidence>
<evidence type="ECO:0007829" key="10">
    <source>
        <dbReference type="PDB" id="1EEP"/>
    </source>
</evidence>
<gene>
    <name evidence="6" type="primary">guaB</name>
    <name type="ordered locus">BB_B17</name>
</gene>
<proteinExistence type="evidence at protein level"/>
<dbReference type="EC" id="1.1.1.205" evidence="5"/>
<dbReference type="EMBL" id="U13372">
    <property type="protein sequence ID" value="AAA53247.1"/>
    <property type="molecule type" value="Genomic_DNA"/>
</dbReference>
<dbReference type="EMBL" id="AE000792">
    <property type="protein sequence ID" value="AAC66314.1"/>
    <property type="molecule type" value="Genomic_DNA"/>
</dbReference>
<dbReference type="PIR" id="E70218">
    <property type="entry name" value="E70218"/>
</dbReference>
<dbReference type="RefSeq" id="NP_047003.1">
    <property type="nucleotide sequence ID" value="NC_001903.1"/>
</dbReference>
<dbReference type="RefSeq" id="WP_010890582.1">
    <property type="nucleotide sequence ID" value="NC_001903.1"/>
</dbReference>
<dbReference type="PDB" id="1EEP">
    <property type="method" value="X-ray"/>
    <property type="resolution" value="2.40 A"/>
    <property type="chains" value="A/B=1-404"/>
</dbReference>
<dbReference type="PDBsum" id="1EEP"/>
<dbReference type="SMR" id="P49058"/>
<dbReference type="BindingDB" id="P49058"/>
<dbReference type="EnsemblBacteria" id="AAC66314">
    <property type="protein sequence ID" value="AAC66314"/>
    <property type="gene ID" value="BB_B17"/>
</dbReference>
<dbReference type="KEGG" id="bbu:BB_B17"/>
<dbReference type="PATRIC" id="fig|224326.49.peg.1605"/>
<dbReference type="HOGENOM" id="CLU_022552_5_3_12"/>
<dbReference type="OrthoDB" id="9805398at2"/>
<dbReference type="BRENDA" id="1.1.1.205">
    <property type="organism ID" value="902"/>
</dbReference>
<dbReference type="SABIO-RK" id="P49058"/>
<dbReference type="UniPathway" id="UPA00601">
    <property type="reaction ID" value="UER00295"/>
</dbReference>
<dbReference type="EvolutionaryTrace" id="P49058"/>
<dbReference type="Proteomes" id="UP000001807">
    <property type="component" value="Plasmid cp26"/>
</dbReference>
<dbReference type="GO" id="GO:0003938">
    <property type="term" value="F:IMP dehydrogenase activity"/>
    <property type="evidence" value="ECO:0007669"/>
    <property type="project" value="UniProtKB-EC"/>
</dbReference>
<dbReference type="GO" id="GO:0046872">
    <property type="term" value="F:metal ion binding"/>
    <property type="evidence" value="ECO:0007669"/>
    <property type="project" value="UniProtKB-KW"/>
</dbReference>
<dbReference type="GO" id="GO:0006177">
    <property type="term" value="P:GMP biosynthetic process"/>
    <property type="evidence" value="ECO:0007669"/>
    <property type="project" value="UniProtKB-KW"/>
</dbReference>
<dbReference type="GO" id="GO:0006183">
    <property type="term" value="P:GTP biosynthetic process"/>
    <property type="evidence" value="ECO:0007669"/>
    <property type="project" value="TreeGrafter"/>
</dbReference>
<dbReference type="CDD" id="cd00381">
    <property type="entry name" value="IMPDH"/>
    <property type="match status" value="1"/>
</dbReference>
<dbReference type="FunFam" id="3.20.20.70:FF:000424">
    <property type="entry name" value="Inosine-5'-monophosphate dehydrogenase 2"/>
    <property type="match status" value="1"/>
</dbReference>
<dbReference type="Gene3D" id="3.20.20.70">
    <property type="entry name" value="Aldolase class I"/>
    <property type="match status" value="2"/>
</dbReference>
<dbReference type="InterPro" id="IPR013785">
    <property type="entry name" value="Aldolase_TIM"/>
</dbReference>
<dbReference type="InterPro" id="IPR005990">
    <property type="entry name" value="IMP_DH"/>
</dbReference>
<dbReference type="InterPro" id="IPR015875">
    <property type="entry name" value="IMP_DH/GMP_Rdtase_CS"/>
</dbReference>
<dbReference type="InterPro" id="IPR001093">
    <property type="entry name" value="IMP_DH_GMPRt"/>
</dbReference>
<dbReference type="NCBIfam" id="NF005311">
    <property type="entry name" value="PRK06843.1"/>
    <property type="match status" value="1"/>
</dbReference>
<dbReference type="PANTHER" id="PTHR11911:SF111">
    <property type="entry name" value="INOSINE-5'-MONOPHOSPHATE DEHYDROGENASE"/>
    <property type="match status" value="1"/>
</dbReference>
<dbReference type="PANTHER" id="PTHR11911">
    <property type="entry name" value="INOSINE-5-MONOPHOSPHATE DEHYDROGENASE RELATED"/>
    <property type="match status" value="1"/>
</dbReference>
<dbReference type="Pfam" id="PF00478">
    <property type="entry name" value="IMPDH"/>
    <property type="match status" value="1"/>
</dbReference>
<dbReference type="PIRSF" id="PIRSF000130">
    <property type="entry name" value="IMPDH"/>
    <property type="match status" value="1"/>
</dbReference>
<dbReference type="SMART" id="SM01240">
    <property type="entry name" value="IMPDH"/>
    <property type="match status" value="1"/>
</dbReference>
<dbReference type="SUPFAM" id="SSF51412">
    <property type="entry name" value="Inosine monophosphate dehydrogenase (IMPDH)"/>
    <property type="match status" value="1"/>
</dbReference>
<dbReference type="PROSITE" id="PS00487">
    <property type="entry name" value="IMP_DH_GMP_RED"/>
    <property type="match status" value="1"/>
</dbReference>
<name>IMDH_BORBU</name>
<sequence>MPNKITKEALTFDDVSLIPRKSSVLPSEVSLKTQLTKNISLNIPFLSSAMDTVTESQMAIAIAKEGGIGIIHKNMSIEAQRKEIEKVKTYKFQKTINTNGDTNEQKPEIFTAKQHLEKSDAYKNAEHKEDFPNACKDLNNKLRVGAAVSIDIDTIERVEELVKAHVDILVIDSAHGHSTRIIELIKKIKTKYPNLDLIAGNIVTKEAALDLISVGADCLKVGIGPGSICTTRIVAGVGVPQITAICDVYEACNNTNICIIADGGIRFSGDVVKAIAAGADSVMIGNLFAGTKESPSEEIIYNGKKFKSYVGMGSISAMKRGSKSRYFQLENNEPKKLVPEGIEGMVPYSGKLKDILTQLKGGLMSGMGYLGAATISDLKINSKFVKISHSSLKESHPHDVFSIT</sequence>
<comment type="function">
    <text evidence="4 5">Catalyzes the conversion of inosine 5'-phosphate (IMP) to xanthosine 5'-phosphate (XMP), the first committed and rate-limiting step in the de novo synthesis of guanine nucleotides, and therefore plays an important role in the regulation of cell growth. Essential for mouse infection by tick bite and critical for the survival in environments that appear to lack sufficient amounts of guanine, guanosine, and/or deoxyguanosine to support spirochete growth, such as mammalian host tissues.</text>
</comment>
<comment type="catalytic activity">
    <reaction evidence="5">
        <text>IMP + NAD(+) + H2O = XMP + NADH + H(+)</text>
        <dbReference type="Rhea" id="RHEA:11708"/>
        <dbReference type="ChEBI" id="CHEBI:15377"/>
        <dbReference type="ChEBI" id="CHEBI:15378"/>
        <dbReference type="ChEBI" id="CHEBI:57464"/>
        <dbReference type="ChEBI" id="CHEBI:57540"/>
        <dbReference type="ChEBI" id="CHEBI:57945"/>
        <dbReference type="ChEBI" id="CHEBI:58053"/>
        <dbReference type="EC" id="1.1.1.205"/>
    </reaction>
</comment>
<comment type="cofactor">
    <cofactor evidence="5">
        <name>K(+)</name>
        <dbReference type="ChEBI" id="CHEBI:29103"/>
    </cofactor>
</comment>
<comment type="activity regulation">
    <text evidence="1">Mycophenolic acid (MPA) is a non-competitive inhibitor that prevents formation of the closed enzyme conformation by binding to the same site as the amobile flap. In contrast, mizoribine monophosphate (MZP) is a competitive inhibitor that induces the closed conformation. MPA is a potent inhibitor of mammalian IMPDHs but a poor inhibitor of the bacterial enzymes. MZP is a more potent inhibitor of bacterial IMPDH.</text>
</comment>
<comment type="biophysicochemical properties">
    <kinetics>
        <KM evidence="5">29 uM for Inosine 5'-phosphate</KM>
        <KM evidence="5">1100 uM for NAD(+)</KM>
    </kinetics>
</comment>
<comment type="pathway">
    <text evidence="9">Purine metabolism; XMP biosynthesis via de novo pathway; XMP from IMP: step 1/1.</text>
</comment>
<comment type="subunit">
    <text evidence="5">Homotetramer.</text>
</comment>
<comment type="similarity">
    <text evidence="8">Belongs to the IMPDH/GMPR family.</text>
</comment>
<keyword id="KW-0002">3D-structure</keyword>
<keyword id="KW-0903">Direct protein sequencing</keyword>
<keyword id="KW-0332">GMP biosynthesis</keyword>
<keyword id="KW-0479">Metal-binding</keyword>
<keyword id="KW-0520">NAD</keyword>
<keyword id="KW-0560">Oxidoreductase</keyword>
<keyword id="KW-0614">Plasmid</keyword>
<keyword id="KW-0630">Potassium</keyword>
<keyword id="KW-0658">Purine biosynthesis</keyword>
<keyword id="KW-1185">Reference proteome</keyword>
<protein>
    <recommendedName>
        <fullName evidence="7">Inosine-5'-monophosphate dehydrogenase</fullName>
        <shortName>IMP dehydrogenase</shortName>
        <shortName>IMPD</shortName>
        <shortName evidence="7">IMPDH</shortName>
        <ecNumber evidence="5">1.1.1.205</ecNumber>
    </recommendedName>
</protein>
<feature type="initiator methionine" description="Removed" evidence="5">
    <location>
        <position position="1"/>
    </location>
</feature>
<feature type="chain" id="PRO_0000093692" description="Inosine-5'-monophosphate dehydrogenase">
    <location>
        <begin position="2"/>
        <end position="404"/>
    </location>
</feature>
<feature type="active site" description="Thioimidate intermediate" evidence="2">
    <location>
        <position position="229"/>
    </location>
</feature>
<feature type="active site" description="Proton acceptor" evidence="3">
    <location>
        <position position="325"/>
    </location>
</feature>
<feature type="binding site" evidence="2">
    <location>
        <position position="172"/>
    </location>
    <ligand>
        <name>NAD(+)</name>
        <dbReference type="ChEBI" id="CHEBI:57540"/>
    </ligand>
</feature>
<feature type="binding site" evidence="2">
    <location>
        <begin position="222"/>
        <end position="224"/>
    </location>
    <ligand>
        <name>NAD(+)</name>
        <dbReference type="ChEBI" id="CHEBI:57540"/>
    </ligand>
</feature>
<feature type="binding site" description="in other chain" evidence="2">
    <location>
        <position position="224"/>
    </location>
    <ligand>
        <name>K(+)</name>
        <dbReference type="ChEBI" id="CHEBI:29103"/>
        <note>ligand shared between two tetrameric partners</note>
    </ligand>
</feature>
<feature type="binding site" description="in other chain" evidence="2">
    <location>
        <position position="226"/>
    </location>
    <ligand>
        <name>K(+)</name>
        <dbReference type="ChEBI" id="CHEBI:29103"/>
        <note>ligand shared between two tetrameric partners</note>
    </ligand>
</feature>
<feature type="binding site" evidence="2">
    <location>
        <position position="227"/>
    </location>
    <ligand>
        <name>IMP</name>
        <dbReference type="ChEBI" id="CHEBI:58053"/>
    </ligand>
</feature>
<feature type="binding site" description="in other chain" evidence="2">
    <location>
        <position position="229"/>
    </location>
    <ligand>
        <name>K(+)</name>
        <dbReference type="ChEBI" id="CHEBI:29103"/>
        <note>ligand shared between two tetrameric partners</note>
    </ligand>
</feature>
<feature type="binding site" evidence="2">
    <location>
        <begin position="262"/>
        <end position="264"/>
    </location>
    <ligand>
        <name>IMP</name>
        <dbReference type="ChEBI" id="CHEBI:58053"/>
    </ligand>
</feature>
<feature type="binding site" evidence="2">
    <location>
        <begin position="285"/>
        <end position="286"/>
    </location>
    <ligand>
        <name>IMP</name>
        <dbReference type="ChEBI" id="CHEBI:58053"/>
    </ligand>
</feature>
<feature type="binding site" evidence="2">
    <location>
        <begin position="309"/>
        <end position="313"/>
    </location>
    <ligand>
        <name>IMP</name>
        <dbReference type="ChEBI" id="CHEBI:58053"/>
    </ligand>
</feature>
<feature type="binding site" evidence="2">
    <location>
        <position position="340"/>
    </location>
    <ligand>
        <name>IMP</name>
        <dbReference type="ChEBI" id="CHEBI:58053"/>
    </ligand>
</feature>
<feature type="binding site" evidence="2">
    <location>
        <position position="394"/>
    </location>
    <ligand>
        <name>K(+)</name>
        <dbReference type="ChEBI" id="CHEBI:29103"/>
        <note>ligand shared between two tetrameric partners</note>
    </ligand>
</feature>
<feature type="binding site" evidence="2">
    <location>
        <position position="395"/>
    </location>
    <ligand>
        <name>K(+)</name>
        <dbReference type="ChEBI" id="CHEBI:29103"/>
        <note>ligand shared between two tetrameric partners</note>
    </ligand>
</feature>
<feature type="binding site" evidence="2">
    <location>
        <position position="396"/>
    </location>
    <ligand>
        <name>K(+)</name>
        <dbReference type="ChEBI" id="CHEBI:29103"/>
        <note>ligand shared between two tetrameric partners</note>
    </ligand>
</feature>
<feature type="helix" evidence="10">
    <location>
        <begin position="12"/>
        <end position="14"/>
    </location>
</feature>
<feature type="strand" evidence="10">
    <location>
        <begin position="15"/>
        <end position="17"/>
    </location>
</feature>
<feature type="helix" evidence="10">
    <location>
        <begin position="26"/>
        <end position="28"/>
    </location>
</feature>
<feature type="strand" evidence="10">
    <location>
        <begin position="33"/>
        <end position="38"/>
    </location>
</feature>
<feature type="strand" evidence="10">
    <location>
        <begin position="40"/>
        <end position="47"/>
    </location>
</feature>
<feature type="turn" evidence="10">
    <location>
        <begin position="51"/>
        <end position="53"/>
    </location>
</feature>
<feature type="helix" evidence="10">
    <location>
        <begin position="56"/>
        <end position="65"/>
    </location>
</feature>
<feature type="strand" evidence="10">
    <location>
        <begin position="67"/>
        <end position="71"/>
    </location>
</feature>
<feature type="strand" evidence="10">
    <location>
        <begin position="73"/>
        <end position="75"/>
    </location>
</feature>
<feature type="helix" evidence="10">
    <location>
        <begin position="77"/>
        <end position="88"/>
    </location>
</feature>
<feature type="strand" evidence="10">
    <location>
        <begin position="145"/>
        <end position="148"/>
    </location>
</feature>
<feature type="helix" evidence="10">
    <location>
        <begin position="154"/>
        <end position="163"/>
    </location>
</feature>
<feature type="strand" evidence="10">
    <location>
        <begin position="167"/>
        <end position="171"/>
    </location>
</feature>
<feature type="helix" evidence="10">
    <location>
        <begin position="179"/>
        <end position="191"/>
    </location>
</feature>
<feature type="strand" evidence="10">
    <location>
        <begin position="196"/>
        <end position="202"/>
    </location>
</feature>
<feature type="helix" evidence="10">
    <location>
        <begin position="205"/>
        <end position="212"/>
    </location>
</feature>
<feature type="turn" evidence="10">
    <location>
        <begin position="213"/>
        <end position="215"/>
    </location>
</feature>
<feature type="strand" evidence="10">
    <location>
        <begin position="217"/>
        <end position="221"/>
    </location>
</feature>
<feature type="helix" evidence="10">
    <location>
        <begin position="230"/>
        <end position="235"/>
    </location>
</feature>
<feature type="helix" evidence="10">
    <location>
        <begin position="241"/>
        <end position="252"/>
    </location>
</feature>
<feature type="strand" evidence="10">
    <location>
        <begin position="258"/>
        <end position="263"/>
    </location>
</feature>
<feature type="helix" evidence="10">
    <location>
        <begin position="268"/>
        <end position="277"/>
    </location>
</feature>
<feature type="strand" evidence="10">
    <location>
        <begin position="280"/>
        <end position="284"/>
    </location>
</feature>
<feature type="helix" evidence="10">
    <location>
        <begin position="286"/>
        <end position="289"/>
    </location>
</feature>
<feature type="strand" evidence="10">
    <location>
        <begin position="294"/>
        <end position="296"/>
    </location>
</feature>
<feature type="strand" evidence="10">
    <location>
        <begin position="298"/>
        <end position="301"/>
    </location>
</feature>
<feature type="strand" evidence="10">
    <location>
        <begin position="304"/>
        <end position="307"/>
    </location>
</feature>
<feature type="helix" evidence="10">
    <location>
        <begin position="352"/>
        <end position="370"/>
    </location>
</feature>
<feature type="helix" evidence="10">
    <location>
        <begin position="375"/>
        <end position="380"/>
    </location>
</feature>
<feature type="strand" evidence="10">
    <location>
        <begin position="384"/>
        <end position="386"/>
    </location>
</feature>
<organism>
    <name type="scientific">Borreliella burgdorferi (strain ATCC 35210 / DSM 4680 / CIP 102532 / B31)</name>
    <name type="common">Borrelia burgdorferi</name>
    <dbReference type="NCBI Taxonomy" id="224326"/>
    <lineage>
        <taxon>Bacteria</taxon>
        <taxon>Pseudomonadati</taxon>
        <taxon>Spirochaetota</taxon>
        <taxon>Spirochaetia</taxon>
        <taxon>Spirochaetales</taxon>
        <taxon>Borreliaceae</taxon>
        <taxon>Borreliella</taxon>
    </lineage>
</organism>